<reference key="1">
    <citation type="journal article" date="2003" name="Genome Res.">
        <title>Comparative genome analysis of Vibrio vulnificus, a marine pathogen.</title>
        <authorList>
            <person name="Chen C.-Y."/>
            <person name="Wu K.-M."/>
            <person name="Chang Y.-C."/>
            <person name="Chang C.-H."/>
            <person name="Tsai H.-C."/>
            <person name="Liao T.-L."/>
            <person name="Liu Y.-M."/>
            <person name="Chen H.-J."/>
            <person name="Shen A.B.-T."/>
            <person name="Li J.-C."/>
            <person name="Su T.-L."/>
            <person name="Shao C.-P."/>
            <person name="Lee C.-T."/>
            <person name="Hor L.-I."/>
            <person name="Tsai S.-F."/>
        </authorList>
    </citation>
    <scope>NUCLEOTIDE SEQUENCE [LARGE SCALE GENOMIC DNA]</scope>
    <source>
        <strain>YJ016</strain>
    </source>
</reference>
<feature type="chain" id="PRO_0000170693" description="Mannonate dehydratase">
    <location>
        <begin position="1"/>
        <end position="395"/>
    </location>
</feature>
<accession>Q7MBZ9</accession>
<proteinExistence type="inferred from homology"/>
<evidence type="ECO:0000255" key="1">
    <source>
        <dbReference type="HAMAP-Rule" id="MF_00106"/>
    </source>
</evidence>
<evidence type="ECO:0000305" key="2"/>
<gene>
    <name evidence="1" type="primary">uxuA</name>
    <name type="ordered locus">VVA1588</name>
</gene>
<protein>
    <recommendedName>
        <fullName evidence="1">Mannonate dehydratase</fullName>
        <ecNumber evidence="1">4.2.1.8</ecNumber>
    </recommendedName>
    <alternativeName>
        <fullName evidence="1">D-mannonate hydro-lyase</fullName>
    </alternativeName>
</protein>
<sequence>MEQTWRWYGPNDPVSLDDICQAGATGIVNALHHIPNGEVWSKEEILKRKAIIEEKGLTWSVVESVPVHEEIKTQTGNFQQWIDNYKQTLRNLAECGIDTVCYNFMPVLDWTRTDLEFEMPDGSKALRFDQIAFAAFELHILKRPGAEADYSEAEQAQALEYFNNMSEAQIQQLTSNIIAGLPGAEEGYTLEEFQAQLDRYAGISKDKLREHMAYFLSQLMPVCEAHGLKLAVHPDDPPRPILGLPRIVSTIEDIDWLTEKVPSKMNGLTMCTGSYGVRGDNDLVKMIKKHGERIYFTHLRSTKREESNPMTFHEAAHLDGDVDMYNVVMAILDEEQRRAEVGDHRLIPMRPDHGHQMLDDLKKKTNPGYSAIGRLKGLAEVRGLEMALKRAFYTK</sequence>
<name>UXUA_VIBVY</name>
<dbReference type="EC" id="4.2.1.8" evidence="1"/>
<dbReference type="EMBL" id="BA000038">
    <property type="protein sequence ID" value="BAC97614.1"/>
    <property type="status" value="ALT_INIT"/>
    <property type="molecule type" value="Genomic_DNA"/>
</dbReference>
<dbReference type="RefSeq" id="WP_043877613.1">
    <property type="nucleotide sequence ID" value="NC_005140.1"/>
</dbReference>
<dbReference type="SMR" id="Q7MBZ9"/>
<dbReference type="STRING" id="672.VV93_v1c44580"/>
<dbReference type="KEGG" id="vvy:VVA1588"/>
<dbReference type="PATRIC" id="fig|196600.6.peg.4718"/>
<dbReference type="eggNOG" id="COG1312">
    <property type="taxonomic scope" value="Bacteria"/>
</dbReference>
<dbReference type="HOGENOM" id="CLU_058621_2_0_6"/>
<dbReference type="UniPathway" id="UPA00246"/>
<dbReference type="Proteomes" id="UP000002675">
    <property type="component" value="Chromosome II"/>
</dbReference>
<dbReference type="GO" id="GO:0008198">
    <property type="term" value="F:ferrous iron binding"/>
    <property type="evidence" value="ECO:0007669"/>
    <property type="project" value="TreeGrafter"/>
</dbReference>
<dbReference type="GO" id="GO:0030145">
    <property type="term" value="F:manganese ion binding"/>
    <property type="evidence" value="ECO:0007669"/>
    <property type="project" value="TreeGrafter"/>
</dbReference>
<dbReference type="GO" id="GO:0008927">
    <property type="term" value="F:mannonate dehydratase activity"/>
    <property type="evidence" value="ECO:0007669"/>
    <property type="project" value="UniProtKB-UniRule"/>
</dbReference>
<dbReference type="GO" id="GO:0042840">
    <property type="term" value="P:D-glucuronate catabolic process"/>
    <property type="evidence" value="ECO:0007669"/>
    <property type="project" value="TreeGrafter"/>
</dbReference>
<dbReference type="FunFam" id="3.20.20.150:FF:000010">
    <property type="entry name" value="Mannonate dehydratase"/>
    <property type="match status" value="1"/>
</dbReference>
<dbReference type="Gene3D" id="3.20.20.150">
    <property type="entry name" value="Divalent-metal-dependent TIM barrel enzymes"/>
    <property type="match status" value="2"/>
</dbReference>
<dbReference type="HAMAP" id="MF_00106">
    <property type="entry name" value="UxuA"/>
    <property type="match status" value="1"/>
</dbReference>
<dbReference type="InterPro" id="IPR004628">
    <property type="entry name" value="Man_deHydtase"/>
</dbReference>
<dbReference type="InterPro" id="IPR036237">
    <property type="entry name" value="Xyl_isomerase-like_sf"/>
</dbReference>
<dbReference type="NCBIfam" id="NF003027">
    <property type="entry name" value="PRK03906.1"/>
    <property type="match status" value="1"/>
</dbReference>
<dbReference type="NCBIfam" id="TIGR00695">
    <property type="entry name" value="uxuA"/>
    <property type="match status" value="1"/>
</dbReference>
<dbReference type="PANTHER" id="PTHR30387">
    <property type="entry name" value="MANNONATE DEHYDRATASE"/>
    <property type="match status" value="1"/>
</dbReference>
<dbReference type="PANTHER" id="PTHR30387:SF2">
    <property type="entry name" value="MANNONATE DEHYDRATASE"/>
    <property type="match status" value="1"/>
</dbReference>
<dbReference type="Pfam" id="PF03786">
    <property type="entry name" value="UxuA"/>
    <property type="match status" value="1"/>
</dbReference>
<dbReference type="PIRSF" id="PIRSF016049">
    <property type="entry name" value="Man_dehyd"/>
    <property type="match status" value="1"/>
</dbReference>
<dbReference type="SUPFAM" id="SSF51658">
    <property type="entry name" value="Xylose isomerase-like"/>
    <property type="match status" value="1"/>
</dbReference>
<keyword id="KW-0408">Iron</keyword>
<keyword id="KW-0456">Lyase</keyword>
<keyword id="KW-0464">Manganese</keyword>
<organism>
    <name type="scientific">Vibrio vulnificus (strain YJ016)</name>
    <dbReference type="NCBI Taxonomy" id="196600"/>
    <lineage>
        <taxon>Bacteria</taxon>
        <taxon>Pseudomonadati</taxon>
        <taxon>Pseudomonadota</taxon>
        <taxon>Gammaproteobacteria</taxon>
        <taxon>Vibrionales</taxon>
        <taxon>Vibrionaceae</taxon>
        <taxon>Vibrio</taxon>
    </lineage>
</organism>
<comment type="function">
    <text evidence="1">Catalyzes the dehydration of D-mannonate.</text>
</comment>
<comment type="catalytic activity">
    <reaction evidence="1">
        <text>D-mannonate = 2-dehydro-3-deoxy-D-gluconate + H2O</text>
        <dbReference type="Rhea" id="RHEA:20097"/>
        <dbReference type="ChEBI" id="CHEBI:15377"/>
        <dbReference type="ChEBI" id="CHEBI:17767"/>
        <dbReference type="ChEBI" id="CHEBI:57990"/>
        <dbReference type="EC" id="4.2.1.8"/>
    </reaction>
</comment>
<comment type="cofactor">
    <cofactor evidence="1">
        <name>Fe(2+)</name>
        <dbReference type="ChEBI" id="CHEBI:29033"/>
    </cofactor>
    <cofactor evidence="1">
        <name>Mn(2+)</name>
        <dbReference type="ChEBI" id="CHEBI:29035"/>
    </cofactor>
</comment>
<comment type="pathway">
    <text evidence="1">Carbohydrate metabolism; pentose and glucuronate interconversion.</text>
</comment>
<comment type="similarity">
    <text evidence="1">Belongs to the mannonate dehydratase family.</text>
</comment>
<comment type="sequence caution" evidence="2">
    <conflict type="erroneous initiation">
        <sequence resource="EMBL-CDS" id="BAC97614"/>
    </conflict>
</comment>